<accession>C4LKZ2</accession>
<dbReference type="EMBL" id="CP001620">
    <property type="protein sequence ID" value="ACR18497.1"/>
    <property type="molecule type" value="Genomic_DNA"/>
</dbReference>
<dbReference type="RefSeq" id="WP_012732384.1">
    <property type="nucleotide sequence ID" value="NC_012704.1"/>
</dbReference>
<dbReference type="SMR" id="C4LKZ2"/>
<dbReference type="STRING" id="645127.ckrop_1776"/>
<dbReference type="GeneID" id="92726579"/>
<dbReference type="KEGG" id="ckp:ckrop_1776"/>
<dbReference type="eggNOG" id="COG0522">
    <property type="taxonomic scope" value="Bacteria"/>
</dbReference>
<dbReference type="HOGENOM" id="CLU_092403_0_2_11"/>
<dbReference type="OrthoDB" id="9803672at2"/>
<dbReference type="Proteomes" id="UP000001473">
    <property type="component" value="Chromosome"/>
</dbReference>
<dbReference type="GO" id="GO:0015935">
    <property type="term" value="C:small ribosomal subunit"/>
    <property type="evidence" value="ECO:0007669"/>
    <property type="project" value="InterPro"/>
</dbReference>
<dbReference type="GO" id="GO:0019843">
    <property type="term" value="F:rRNA binding"/>
    <property type="evidence" value="ECO:0007669"/>
    <property type="project" value="UniProtKB-UniRule"/>
</dbReference>
<dbReference type="GO" id="GO:0003735">
    <property type="term" value="F:structural constituent of ribosome"/>
    <property type="evidence" value="ECO:0007669"/>
    <property type="project" value="InterPro"/>
</dbReference>
<dbReference type="GO" id="GO:0042274">
    <property type="term" value="P:ribosomal small subunit biogenesis"/>
    <property type="evidence" value="ECO:0007669"/>
    <property type="project" value="TreeGrafter"/>
</dbReference>
<dbReference type="GO" id="GO:0006412">
    <property type="term" value="P:translation"/>
    <property type="evidence" value="ECO:0007669"/>
    <property type="project" value="UniProtKB-UniRule"/>
</dbReference>
<dbReference type="CDD" id="cd00165">
    <property type="entry name" value="S4"/>
    <property type="match status" value="1"/>
</dbReference>
<dbReference type="FunFam" id="3.10.290.10:FF:000001">
    <property type="entry name" value="30S ribosomal protein S4"/>
    <property type="match status" value="1"/>
</dbReference>
<dbReference type="Gene3D" id="1.10.1050.10">
    <property type="entry name" value="Ribosomal Protein S4 Delta 41, Chain A, domain 1"/>
    <property type="match status" value="1"/>
</dbReference>
<dbReference type="Gene3D" id="3.10.290.10">
    <property type="entry name" value="RNA-binding S4 domain"/>
    <property type="match status" value="1"/>
</dbReference>
<dbReference type="HAMAP" id="MF_01306_B">
    <property type="entry name" value="Ribosomal_uS4_B"/>
    <property type="match status" value="1"/>
</dbReference>
<dbReference type="InterPro" id="IPR022801">
    <property type="entry name" value="Ribosomal_uS4"/>
</dbReference>
<dbReference type="InterPro" id="IPR005709">
    <property type="entry name" value="Ribosomal_uS4_bac-type"/>
</dbReference>
<dbReference type="InterPro" id="IPR018079">
    <property type="entry name" value="Ribosomal_uS4_CS"/>
</dbReference>
<dbReference type="InterPro" id="IPR001912">
    <property type="entry name" value="Ribosomal_uS4_N"/>
</dbReference>
<dbReference type="InterPro" id="IPR002942">
    <property type="entry name" value="S4_RNA-bd"/>
</dbReference>
<dbReference type="InterPro" id="IPR036986">
    <property type="entry name" value="S4_RNA-bd_sf"/>
</dbReference>
<dbReference type="NCBIfam" id="NF003717">
    <property type="entry name" value="PRK05327.1"/>
    <property type="match status" value="1"/>
</dbReference>
<dbReference type="NCBIfam" id="TIGR01017">
    <property type="entry name" value="rpsD_bact"/>
    <property type="match status" value="1"/>
</dbReference>
<dbReference type="PANTHER" id="PTHR11831">
    <property type="entry name" value="30S 40S RIBOSOMAL PROTEIN"/>
    <property type="match status" value="1"/>
</dbReference>
<dbReference type="PANTHER" id="PTHR11831:SF4">
    <property type="entry name" value="SMALL RIBOSOMAL SUBUNIT PROTEIN US4M"/>
    <property type="match status" value="1"/>
</dbReference>
<dbReference type="Pfam" id="PF00163">
    <property type="entry name" value="Ribosomal_S4"/>
    <property type="match status" value="1"/>
</dbReference>
<dbReference type="Pfam" id="PF01479">
    <property type="entry name" value="S4"/>
    <property type="match status" value="1"/>
</dbReference>
<dbReference type="SMART" id="SM01390">
    <property type="entry name" value="Ribosomal_S4"/>
    <property type="match status" value="1"/>
</dbReference>
<dbReference type="SMART" id="SM00363">
    <property type="entry name" value="S4"/>
    <property type="match status" value="1"/>
</dbReference>
<dbReference type="SUPFAM" id="SSF55174">
    <property type="entry name" value="Alpha-L RNA-binding motif"/>
    <property type="match status" value="1"/>
</dbReference>
<dbReference type="PROSITE" id="PS00632">
    <property type="entry name" value="RIBOSOMAL_S4"/>
    <property type="match status" value="1"/>
</dbReference>
<dbReference type="PROSITE" id="PS50889">
    <property type="entry name" value="S4"/>
    <property type="match status" value="1"/>
</dbReference>
<gene>
    <name evidence="1" type="primary">rpsD</name>
    <name type="ordered locus">ckrop_1776</name>
</gene>
<proteinExistence type="inferred from homology"/>
<comment type="function">
    <text evidence="1">One of the primary rRNA binding proteins, it binds directly to 16S rRNA where it nucleates assembly of the body of the 30S subunit.</text>
</comment>
<comment type="function">
    <text evidence="1">With S5 and S12 plays an important role in translational accuracy.</text>
</comment>
<comment type="subunit">
    <text evidence="1">Part of the 30S ribosomal subunit. Contacts protein S5. The interaction surface between S4 and S5 is involved in control of translational fidelity.</text>
</comment>
<comment type="similarity">
    <text evidence="1">Belongs to the universal ribosomal protein uS4 family.</text>
</comment>
<evidence type="ECO:0000255" key="1">
    <source>
        <dbReference type="HAMAP-Rule" id="MF_01306"/>
    </source>
</evidence>
<evidence type="ECO:0000305" key="2"/>
<reference key="1">
    <citation type="journal article" date="2008" name="J. Biotechnol.">
        <title>Ultrafast pyrosequencing of Corynebacterium kroppenstedtii DSM44385 revealed insights into the physiology of a lipophilic corynebacterium that lacks mycolic acids.</title>
        <authorList>
            <person name="Tauch A."/>
            <person name="Schneider J."/>
            <person name="Szczepanowski R."/>
            <person name="Tilker A."/>
            <person name="Viehoever P."/>
            <person name="Gartemann K.-H."/>
            <person name="Arnold W."/>
            <person name="Blom J."/>
            <person name="Brinkrolf K."/>
            <person name="Brune I."/>
            <person name="Goetker S."/>
            <person name="Weisshaar B."/>
            <person name="Goesmann A."/>
            <person name="Droege M."/>
            <person name="Puehler A."/>
        </authorList>
    </citation>
    <scope>NUCLEOTIDE SEQUENCE [LARGE SCALE GENOMIC DNA]</scope>
    <source>
        <strain>DSM 44385 / JCM 11950 / CIP 105744 / CCUG 35717</strain>
    </source>
</reference>
<sequence>MARYTGPATRKSRRLRVDLVGGDANFERRPYPPGQAGRARIKESEYLLQLQEKQKARFTYGIMEKQFRRYYAEAHRRPGKTGDNLMVLLESRLDNVVYRAGLARTRRQARQLVSHGHFTVNGKKVNVPSFQVSQYDIIDVREKSRKMVWFDEAQEALADAVVPAWLQVVPSTLRILVHQLPERAQIEVPIQEQLIVEFYSK</sequence>
<protein>
    <recommendedName>
        <fullName evidence="1">Small ribosomal subunit protein uS4</fullName>
    </recommendedName>
    <alternativeName>
        <fullName evidence="2">30S ribosomal protein S4</fullName>
    </alternativeName>
</protein>
<organism>
    <name type="scientific">Corynebacterium kroppenstedtii (strain DSM 44385 / JCM 11950 / CIP 105744 / CCUG 35717)</name>
    <dbReference type="NCBI Taxonomy" id="645127"/>
    <lineage>
        <taxon>Bacteria</taxon>
        <taxon>Bacillati</taxon>
        <taxon>Actinomycetota</taxon>
        <taxon>Actinomycetes</taxon>
        <taxon>Mycobacteriales</taxon>
        <taxon>Corynebacteriaceae</taxon>
        <taxon>Corynebacterium</taxon>
    </lineage>
</organism>
<feature type="chain" id="PRO_1000214281" description="Small ribosomal subunit protein uS4">
    <location>
        <begin position="1"/>
        <end position="201"/>
    </location>
</feature>
<feature type="domain" description="S4 RNA-binding" evidence="1">
    <location>
        <begin position="91"/>
        <end position="151"/>
    </location>
</feature>
<keyword id="KW-1185">Reference proteome</keyword>
<keyword id="KW-0687">Ribonucleoprotein</keyword>
<keyword id="KW-0689">Ribosomal protein</keyword>
<keyword id="KW-0694">RNA-binding</keyword>
<keyword id="KW-0699">rRNA-binding</keyword>
<name>RS4_CORK4</name>